<sequence>MASVDLAKVGTILVKNALSGEMVELKSLWKEKTTVLLFLRRFGCQICRWIAKDIGKLKASCDAHQIRLVGIGPEEVGLKEFLEGNFFNGELYIDESKESYKTLGFKRYSALSVIPAALGKKVRDIVTKANADGVQGNFSGDLLQSGGMLIVSKGGEKVLLHFIQDSPGDYVPLESIVQTLGITANVTESQRPQCNDEVCTR</sequence>
<comment type="function">
    <text evidence="1">Catalyzes the reduction of prostaglandin-ethanolamide H(2) (prostamide H(2)) to prostamide F(2alpha) with NADPH as proton donor. Also able to reduce prostaglandin H(2) to prostaglandin F(2alpha) (By similarity).</text>
</comment>
<comment type="catalytic activity">
    <reaction evidence="1">
        <text>prostaglandin H2 + [thioredoxin]-dithiol = prostaglandin F2alpha + [thioredoxin]-disulfide</text>
        <dbReference type="Rhea" id="RHEA:28214"/>
        <dbReference type="Rhea" id="RHEA-COMP:10698"/>
        <dbReference type="Rhea" id="RHEA-COMP:10700"/>
        <dbReference type="ChEBI" id="CHEBI:29950"/>
        <dbReference type="ChEBI" id="CHEBI:50058"/>
        <dbReference type="ChEBI" id="CHEBI:57404"/>
        <dbReference type="ChEBI" id="CHEBI:57405"/>
        <dbReference type="EC" id="1.11.1.20"/>
    </reaction>
</comment>
<comment type="catalytic activity">
    <reaction evidence="1">
        <text>prostamide F2alpha + [thioredoxin]-disulfide = prostamide H2 + [thioredoxin]-dithiol</text>
        <dbReference type="Rhea" id="RHEA:26373"/>
        <dbReference type="Rhea" id="RHEA-COMP:10698"/>
        <dbReference type="Rhea" id="RHEA-COMP:10700"/>
        <dbReference type="ChEBI" id="CHEBI:29950"/>
        <dbReference type="ChEBI" id="CHEBI:50058"/>
        <dbReference type="ChEBI" id="CHEBI:53081"/>
        <dbReference type="ChEBI" id="CHEBI:53082"/>
        <dbReference type="EC" id="1.11.1.20"/>
    </reaction>
</comment>
<comment type="subcellular location">
    <subcellularLocation>
        <location evidence="1">Cytoplasm</location>
        <location evidence="1">Cytosol</location>
    </subcellularLocation>
</comment>
<comment type="similarity">
    <text evidence="2">Belongs to the peroxiredoxin-like PRXL2 family. Prostamide/prostaglandin F synthase subfamily.</text>
</comment>
<keyword id="KW-0963">Cytoplasm</keyword>
<keyword id="KW-0275">Fatty acid biosynthesis</keyword>
<keyword id="KW-0276">Fatty acid metabolism</keyword>
<keyword id="KW-0444">Lipid biosynthesis</keyword>
<keyword id="KW-0443">Lipid metabolism</keyword>
<keyword id="KW-0521">NADP</keyword>
<keyword id="KW-0560">Oxidoreductase</keyword>
<keyword id="KW-0643">Prostaglandin biosynthesis</keyword>
<keyword id="KW-0644">Prostaglandin metabolism</keyword>
<keyword id="KW-1185">Reference proteome</keyword>
<organism>
    <name type="scientific">Xenopus tropicalis</name>
    <name type="common">Western clawed frog</name>
    <name type="synonym">Silurana tropicalis</name>
    <dbReference type="NCBI Taxonomy" id="8364"/>
    <lineage>
        <taxon>Eukaryota</taxon>
        <taxon>Metazoa</taxon>
        <taxon>Chordata</taxon>
        <taxon>Craniata</taxon>
        <taxon>Vertebrata</taxon>
        <taxon>Euteleostomi</taxon>
        <taxon>Amphibia</taxon>
        <taxon>Batrachia</taxon>
        <taxon>Anura</taxon>
        <taxon>Pipoidea</taxon>
        <taxon>Pipidae</taxon>
        <taxon>Xenopodinae</taxon>
        <taxon>Xenopus</taxon>
        <taxon>Silurana</taxon>
    </lineage>
</organism>
<feature type="chain" id="PRO_0000284642" description="Prostamide/prostaglandin F synthase">
    <location>
        <begin position="1"/>
        <end position="201"/>
    </location>
</feature>
<gene>
    <name type="primary">prxl2b</name>
    <name type="synonym">fam213b</name>
    <name type="ORF">TNeu028h04.1</name>
</gene>
<dbReference type="EC" id="1.11.1.20" evidence="1"/>
<dbReference type="EMBL" id="CR760360">
    <property type="protein sequence ID" value="CAJ83264.1"/>
    <property type="molecule type" value="mRNA"/>
</dbReference>
<dbReference type="RefSeq" id="NP_001017220.1">
    <property type="nucleotide sequence ID" value="NM_001017220.2"/>
</dbReference>
<dbReference type="SMR" id="Q28IJ3"/>
<dbReference type="FunCoup" id="Q28IJ3">
    <property type="interactions" value="80"/>
</dbReference>
<dbReference type="STRING" id="8364.ENSXETP00000041380"/>
<dbReference type="PaxDb" id="8364-ENSXETP00000045936"/>
<dbReference type="GeneID" id="549974"/>
<dbReference type="KEGG" id="xtr:549974"/>
<dbReference type="AGR" id="Xenbase:XB-GENE-968463"/>
<dbReference type="CTD" id="127281"/>
<dbReference type="Xenbase" id="XB-GENE-968463">
    <property type="gene designation" value="prxl2b"/>
</dbReference>
<dbReference type="eggNOG" id="KOG4498">
    <property type="taxonomic scope" value="Eukaryota"/>
</dbReference>
<dbReference type="HOGENOM" id="CLU_094994_0_0_1"/>
<dbReference type="InParanoid" id="Q28IJ3"/>
<dbReference type="OMA" id="QRPVCND"/>
<dbReference type="OrthoDB" id="40334at2759"/>
<dbReference type="PhylomeDB" id="Q28IJ3"/>
<dbReference type="TreeFam" id="TF313804"/>
<dbReference type="Proteomes" id="UP000008143">
    <property type="component" value="Chromosome 7"/>
</dbReference>
<dbReference type="Bgee" id="ENSXETG00000021242">
    <property type="expression patterns" value="Expressed in neurula embryo and 12 other cell types or tissues"/>
</dbReference>
<dbReference type="GO" id="GO:0005829">
    <property type="term" value="C:cytosol"/>
    <property type="evidence" value="ECO:0007669"/>
    <property type="project" value="UniProtKB-SubCell"/>
</dbReference>
<dbReference type="GO" id="GO:0016616">
    <property type="term" value="F:oxidoreductase activity, acting on the CH-OH group of donors, NAD or NADP as acceptor"/>
    <property type="evidence" value="ECO:0000250"/>
    <property type="project" value="UniProtKB"/>
</dbReference>
<dbReference type="GO" id="GO:0001516">
    <property type="term" value="P:prostaglandin biosynthetic process"/>
    <property type="evidence" value="ECO:0000250"/>
    <property type="project" value="UniProtKB"/>
</dbReference>
<dbReference type="CDD" id="cd02970">
    <property type="entry name" value="PRX_like2"/>
    <property type="match status" value="1"/>
</dbReference>
<dbReference type="FunFam" id="3.40.30.10:FF:000243">
    <property type="entry name" value="Prostamide/prostaglandin F synthase"/>
    <property type="match status" value="1"/>
</dbReference>
<dbReference type="Gene3D" id="3.40.30.10">
    <property type="entry name" value="Glutaredoxin"/>
    <property type="match status" value="1"/>
</dbReference>
<dbReference type="InterPro" id="IPR032801">
    <property type="entry name" value="PXL2A/B/C"/>
</dbReference>
<dbReference type="InterPro" id="IPR036249">
    <property type="entry name" value="Thioredoxin-like_sf"/>
</dbReference>
<dbReference type="PANTHER" id="PTHR28630">
    <property type="match status" value="1"/>
</dbReference>
<dbReference type="PANTHER" id="PTHR28630:SF29">
    <property type="entry name" value="PROSTAMIDE_PROSTAGLANDIN F SYNTHASE"/>
    <property type="match status" value="1"/>
</dbReference>
<dbReference type="Pfam" id="PF13911">
    <property type="entry name" value="AhpC-TSA_2"/>
    <property type="match status" value="1"/>
</dbReference>
<dbReference type="SUPFAM" id="SSF52833">
    <property type="entry name" value="Thioredoxin-like"/>
    <property type="match status" value="1"/>
</dbReference>
<name>PXL2B_XENTR</name>
<evidence type="ECO:0000250" key="1">
    <source>
        <dbReference type="UniProtKB" id="Q9DB60"/>
    </source>
</evidence>
<evidence type="ECO:0000305" key="2"/>
<reference key="1">
    <citation type="submission" date="2006-10" db="EMBL/GenBank/DDBJ databases">
        <authorList>
            <consortium name="Sanger Xenopus tropicalis EST/cDNA project"/>
        </authorList>
    </citation>
    <scope>NUCLEOTIDE SEQUENCE [LARGE SCALE MRNA]</scope>
    <source>
        <tissue>Neurula</tissue>
    </source>
</reference>
<accession>Q28IJ3</accession>
<protein>
    <recommendedName>
        <fullName>Prostamide/prostaglandin F synthase</fullName>
        <shortName>Prostamide/PG F synthase</shortName>
        <shortName>Prostamide/PGF synthase</shortName>
        <ecNumber evidence="1">1.11.1.20</ecNumber>
    </recommendedName>
    <alternativeName>
        <fullName>Peroxiredoxin-like 2B</fullName>
    </alternativeName>
</protein>
<proteinExistence type="evidence at transcript level"/>